<evidence type="ECO:0000255" key="1">
    <source>
        <dbReference type="HAMAP-Rule" id="MF_00514"/>
    </source>
</evidence>
<evidence type="ECO:0000305" key="2"/>
<dbReference type="EMBL" id="AL935263">
    <property type="protein sequence ID" value="CCC78842.1"/>
    <property type="molecule type" value="Genomic_DNA"/>
</dbReference>
<dbReference type="RefSeq" id="WP_003638526.1">
    <property type="nucleotide sequence ID" value="NC_004567.2"/>
</dbReference>
<dbReference type="RefSeq" id="YP_004889356.1">
    <property type="nucleotide sequence ID" value="NC_004567.2"/>
</dbReference>
<dbReference type="SMR" id="Q88WU7"/>
<dbReference type="STRING" id="220668.lp_1516"/>
<dbReference type="EnsemblBacteria" id="CCC78842">
    <property type="protein sequence ID" value="CCC78842"/>
    <property type="gene ID" value="lp_1516"/>
</dbReference>
<dbReference type="GeneID" id="89668899"/>
<dbReference type="KEGG" id="lpl:lp_1516"/>
<dbReference type="PATRIC" id="fig|220668.9.peg.1276"/>
<dbReference type="eggNOG" id="COG0291">
    <property type="taxonomic scope" value="Bacteria"/>
</dbReference>
<dbReference type="HOGENOM" id="CLU_169643_3_1_9"/>
<dbReference type="OrthoDB" id="47476at2"/>
<dbReference type="PhylomeDB" id="Q88WU7"/>
<dbReference type="Proteomes" id="UP000000432">
    <property type="component" value="Chromosome"/>
</dbReference>
<dbReference type="GO" id="GO:0022625">
    <property type="term" value="C:cytosolic large ribosomal subunit"/>
    <property type="evidence" value="ECO:0007669"/>
    <property type="project" value="TreeGrafter"/>
</dbReference>
<dbReference type="GO" id="GO:0003735">
    <property type="term" value="F:structural constituent of ribosome"/>
    <property type="evidence" value="ECO:0007669"/>
    <property type="project" value="InterPro"/>
</dbReference>
<dbReference type="GO" id="GO:0006412">
    <property type="term" value="P:translation"/>
    <property type="evidence" value="ECO:0007669"/>
    <property type="project" value="UniProtKB-UniRule"/>
</dbReference>
<dbReference type="FunFam" id="4.10.410.60:FF:000001">
    <property type="entry name" value="50S ribosomal protein L35"/>
    <property type="match status" value="1"/>
</dbReference>
<dbReference type="Gene3D" id="4.10.410.60">
    <property type="match status" value="1"/>
</dbReference>
<dbReference type="HAMAP" id="MF_00514">
    <property type="entry name" value="Ribosomal_bL35"/>
    <property type="match status" value="1"/>
</dbReference>
<dbReference type="InterPro" id="IPR001706">
    <property type="entry name" value="Ribosomal_bL35"/>
</dbReference>
<dbReference type="InterPro" id="IPR021137">
    <property type="entry name" value="Ribosomal_bL35-like"/>
</dbReference>
<dbReference type="InterPro" id="IPR018265">
    <property type="entry name" value="Ribosomal_bL35_CS"/>
</dbReference>
<dbReference type="InterPro" id="IPR037229">
    <property type="entry name" value="Ribosomal_bL35_sf"/>
</dbReference>
<dbReference type="NCBIfam" id="TIGR00001">
    <property type="entry name" value="rpmI_bact"/>
    <property type="match status" value="1"/>
</dbReference>
<dbReference type="PANTHER" id="PTHR33343">
    <property type="entry name" value="54S RIBOSOMAL PROTEIN BL35M"/>
    <property type="match status" value="1"/>
</dbReference>
<dbReference type="PANTHER" id="PTHR33343:SF1">
    <property type="entry name" value="LARGE RIBOSOMAL SUBUNIT PROTEIN BL35M"/>
    <property type="match status" value="1"/>
</dbReference>
<dbReference type="Pfam" id="PF01632">
    <property type="entry name" value="Ribosomal_L35p"/>
    <property type="match status" value="1"/>
</dbReference>
<dbReference type="PRINTS" id="PR00064">
    <property type="entry name" value="RIBOSOMALL35"/>
</dbReference>
<dbReference type="SUPFAM" id="SSF143034">
    <property type="entry name" value="L35p-like"/>
    <property type="match status" value="1"/>
</dbReference>
<dbReference type="PROSITE" id="PS00936">
    <property type="entry name" value="RIBOSOMAL_L35"/>
    <property type="match status" value="1"/>
</dbReference>
<feature type="chain" id="PRO_0000177372" description="Large ribosomal subunit protein bL35">
    <location>
        <begin position="1"/>
        <end position="64"/>
    </location>
</feature>
<reference key="1">
    <citation type="journal article" date="2003" name="Proc. Natl. Acad. Sci. U.S.A.">
        <title>Complete genome sequence of Lactobacillus plantarum WCFS1.</title>
        <authorList>
            <person name="Kleerebezem M."/>
            <person name="Boekhorst J."/>
            <person name="van Kranenburg R."/>
            <person name="Molenaar D."/>
            <person name="Kuipers O.P."/>
            <person name="Leer R."/>
            <person name="Tarchini R."/>
            <person name="Peters S.A."/>
            <person name="Sandbrink H.M."/>
            <person name="Fiers M.W.E.J."/>
            <person name="Stiekema W."/>
            <person name="Klein Lankhorst R.M."/>
            <person name="Bron P.A."/>
            <person name="Hoffer S.M."/>
            <person name="Nierop Groot M.N."/>
            <person name="Kerkhoven R."/>
            <person name="De Vries M."/>
            <person name="Ursing B."/>
            <person name="De Vos W.M."/>
            <person name="Siezen R.J."/>
        </authorList>
    </citation>
    <scope>NUCLEOTIDE SEQUENCE [LARGE SCALE GENOMIC DNA]</scope>
    <source>
        <strain>ATCC BAA-793 / NCIMB 8826 / WCFS1</strain>
    </source>
</reference>
<reference key="2">
    <citation type="journal article" date="2012" name="J. Bacteriol.">
        <title>Complete resequencing and reannotation of the Lactobacillus plantarum WCFS1 genome.</title>
        <authorList>
            <person name="Siezen R.J."/>
            <person name="Francke C."/>
            <person name="Renckens B."/>
            <person name="Boekhorst J."/>
            <person name="Wels M."/>
            <person name="Kleerebezem M."/>
            <person name="van Hijum S.A."/>
        </authorList>
    </citation>
    <scope>NUCLEOTIDE SEQUENCE [LARGE SCALE GENOMIC DNA]</scope>
    <scope>GENOME REANNOTATION</scope>
    <source>
        <strain>ATCC BAA-793 / NCIMB 8826 / WCFS1</strain>
    </source>
</reference>
<protein>
    <recommendedName>
        <fullName evidence="1">Large ribosomal subunit protein bL35</fullName>
    </recommendedName>
    <alternativeName>
        <fullName evidence="2">50S ribosomal protein L35</fullName>
    </alternativeName>
</protein>
<proteinExistence type="inferred from homology"/>
<keyword id="KW-1185">Reference proteome</keyword>
<keyword id="KW-0687">Ribonucleoprotein</keyword>
<keyword id="KW-0689">Ribosomal protein</keyword>
<gene>
    <name evidence="1" type="primary">rpmI</name>
    <name type="ordered locus">lp_1516</name>
</gene>
<accession>Q88WU7</accession>
<accession>F9UNQ3</accession>
<organism>
    <name type="scientific">Lactiplantibacillus plantarum (strain ATCC BAA-793 / NCIMB 8826 / WCFS1)</name>
    <name type="common">Lactobacillus plantarum</name>
    <dbReference type="NCBI Taxonomy" id="220668"/>
    <lineage>
        <taxon>Bacteria</taxon>
        <taxon>Bacillati</taxon>
        <taxon>Bacillota</taxon>
        <taxon>Bacilli</taxon>
        <taxon>Lactobacillales</taxon>
        <taxon>Lactobacillaceae</taxon>
        <taxon>Lactiplantibacillus</taxon>
    </lineage>
</organism>
<sequence>MPKQKTNRAAAKRFKVTAKGKIKSANAFTSHRFHGKTKKQRRQLRGTAIIEKPMVKTYHKLLQK</sequence>
<name>RL35_LACPL</name>
<comment type="similarity">
    <text evidence="1">Belongs to the bacterial ribosomal protein bL35 family.</text>
</comment>